<proteinExistence type="inferred from homology"/>
<reference key="1">
    <citation type="submission" date="2005-03" db="EMBL/GenBank/DDBJ databases">
        <title>Annotation of the Saccharomyces cerevisiae RM11-1a genome.</title>
        <authorList>
            <consortium name="The Broad Institute Genome Sequencing Platform"/>
            <person name="Birren B.W."/>
            <person name="Lander E.S."/>
            <person name="Galagan J.E."/>
            <person name="Nusbaum C."/>
            <person name="Devon K."/>
            <person name="Cuomo C."/>
            <person name="Jaffe D.B."/>
            <person name="Butler J."/>
            <person name="Alvarez P."/>
            <person name="Gnerre S."/>
            <person name="Grabherr M."/>
            <person name="Kleber M."/>
            <person name="Mauceli E.W."/>
            <person name="Brockman W."/>
            <person name="MacCallum I.A."/>
            <person name="Rounsley S."/>
            <person name="Young S.K."/>
            <person name="LaButti K."/>
            <person name="Pushparaj V."/>
            <person name="DeCaprio D."/>
            <person name="Crawford M."/>
            <person name="Koehrsen M."/>
            <person name="Engels R."/>
            <person name="Montgomery P."/>
            <person name="Pearson M."/>
            <person name="Howarth C."/>
            <person name="Larson L."/>
            <person name="Luoma S."/>
            <person name="White J."/>
            <person name="O'Leary S."/>
            <person name="Kodira C.D."/>
            <person name="Zeng Q."/>
            <person name="Yandava C."/>
            <person name="Alvarado L."/>
            <person name="Pratt S."/>
            <person name="Kruglyak L."/>
        </authorList>
    </citation>
    <scope>NUCLEOTIDE SEQUENCE [LARGE SCALE GENOMIC DNA]</scope>
    <source>
        <strain>RM11-1a</strain>
    </source>
</reference>
<feature type="chain" id="PRO_0000409736" description="Suppressor of hydroxyurea sensitivity protein 2">
    <location>
        <begin position="1"/>
        <end position="223"/>
    </location>
</feature>
<sequence length="223" mass="26137">MSKDVIEYSKLFAKLVNTNDDTKLDDTIASFLYYMFPRELFIRAISLLESSDMFIYILDRVHNKEGNEHTSLIDVLVDEFYKGSSNSLLEYRLIVKDTNDGAPPILVDIAHWFCSCEEFCKYFHEALEKTDEKEELHDVLINEVDDHLQFSDDRFAQLDPHSLSKQWYFKFDKICCSHLLAFSILLRSSINVLKFFTVNSNKVFVIAIDNIDEWLNLHINIVE</sequence>
<accession>B3LGJ2</accession>
<name>SHU2_YEAS1</name>
<protein>
    <recommendedName>
        <fullName>Suppressor of hydroxyurea sensitivity protein 2</fullName>
    </recommendedName>
</protein>
<evidence type="ECO:0000250" key="1"/>
<evidence type="ECO:0000305" key="2"/>
<dbReference type="EMBL" id="CH408043">
    <property type="protein sequence ID" value="EDV08221.1"/>
    <property type="molecule type" value="Genomic_DNA"/>
</dbReference>
<dbReference type="SMR" id="B3LGJ2"/>
<dbReference type="HOGENOM" id="CLU_1115918_0_0_1"/>
<dbReference type="OrthoDB" id="38539at4893"/>
<dbReference type="Proteomes" id="UP000008335">
    <property type="component" value="Unassembled WGS sequence"/>
</dbReference>
<dbReference type="GO" id="GO:0005634">
    <property type="term" value="C:nucleus"/>
    <property type="evidence" value="ECO:0007669"/>
    <property type="project" value="UniProtKB-SubCell"/>
</dbReference>
<dbReference type="GO" id="GO:0006310">
    <property type="term" value="P:DNA recombination"/>
    <property type="evidence" value="ECO:0007669"/>
    <property type="project" value="UniProtKB-KW"/>
</dbReference>
<dbReference type="GO" id="GO:0006281">
    <property type="term" value="P:DNA repair"/>
    <property type="evidence" value="ECO:0007669"/>
    <property type="project" value="UniProtKB-KW"/>
</dbReference>
<organism>
    <name type="scientific">Saccharomyces cerevisiae (strain RM11-1a)</name>
    <name type="common">Baker's yeast</name>
    <dbReference type="NCBI Taxonomy" id="285006"/>
    <lineage>
        <taxon>Eukaryota</taxon>
        <taxon>Fungi</taxon>
        <taxon>Dikarya</taxon>
        <taxon>Ascomycota</taxon>
        <taxon>Saccharomycotina</taxon>
        <taxon>Saccharomycetes</taxon>
        <taxon>Saccharomycetales</taxon>
        <taxon>Saccharomycetaceae</taxon>
        <taxon>Saccharomyces</taxon>
    </lineage>
</organism>
<comment type="function">
    <text evidence="1">Plays a role in a RAD51/RAD54-dependent homologous recombination repair (HRR) pathway to repair MMS-induced lesions during S-phase. Required for error-free repair of spontaneous and induced DNA lesions to protect the genome from mutation (By similarity).</text>
</comment>
<comment type="subunit">
    <text evidence="1">Component of the SHU complex composed of at least CSM2, PSY3, SHU1 and SHU2.</text>
</comment>
<comment type="subcellular location">
    <subcellularLocation>
        <location evidence="1">Nucleus</location>
    </subcellularLocation>
</comment>
<comment type="similarity">
    <text evidence="2">Belongs to the SHU2 family.</text>
</comment>
<keyword id="KW-0227">DNA damage</keyword>
<keyword id="KW-0233">DNA recombination</keyword>
<keyword id="KW-0234">DNA repair</keyword>
<keyword id="KW-0539">Nucleus</keyword>
<gene>
    <name type="primary">SHU2</name>
    <name type="ORF">SCRG_00437</name>
</gene>